<name>ACRZ_ECOL6</name>
<accession>P0AAX0</accession>
<accession>P75759</accession>
<feature type="chain" id="PRO_0000042562" description="Multidrug efflux pump accessory protein AcrZ">
    <location>
        <begin position="1"/>
        <end position="49"/>
    </location>
</feature>
<feature type="topological domain" description="Periplasmic" evidence="1">
    <location>
        <begin position="1"/>
        <end position="7"/>
    </location>
</feature>
<feature type="transmembrane region" description="Helical" evidence="2">
    <location>
        <begin position="8"/>
        <end position="28"/>
    </location>
</feature>
<feature type="topological domain" description="Cytoplasmic" evidence="1">
    <location>
        <begin position="29"/>
        <end position="49"/>
    </location>
</feature>
<dbReference type="EMBL" id="AE014075">
    <property type="protein sequence ID" value="AAN79311.1"/>
    <property type="status" value="ALT_INIT"/>
    <property type="molecule type" value="Genomic_DNA"/>
</dbReference>
<dbReference type="RefSeq" id="WP_000891515.1">
    <property type="nucleotide sequence ID" value="NZ_CP051263.1"/>
</dbReference>
<dbReference type="SMR" id="P0AAX0"/>
<dbReference type="STRING" id="199310.c0838"/>
<dbReference type="GeneID" id="93776719"/>
<dbReference type="KEGG" id="ecc:c0838"/>
<dbReference type="eggNOG" id="ENOG5033AHW">
    <property type="taxonomic scope" value="Bacteria"/>
</dbReference>
<dbReference type="HOGENOM" id="CLU_196028_0_1_6"/>
<dbReference type="Proteomes" id="UP000001410">
    <property type="component" value="Chromosome"/>
</dbReference>
<dbReference type="GO" id="GO:0005886">
    <property type="term" value="C:plasma membrane"/>
    <property type="evidence" value="ECO:0007669"/>
    <property type="project" value="UniProtKB-SubCell"/>
</dbReference>
<dbReference type="GO" id="GO:0042910">
    <property type="term" value="F:xenobiotic transmembrane transporter activity"/>
    <property type="evidence" value="ECO:0007669"/>
    <property type="project" value="UniProtKB-UniRule"/>
</dbReference>
<dbReference type="GO" id="GO:0046677">
    <property type="term" value="P:response to antibiotic"/>
    <property type="evidence" value="ECO:0007669"/>
    <property type="project" value="UniProtKB-KW"/>
</dbReference>
<dbReference type="GO" id="GO:1990961">
    <property type="term" value="P:xenobiotic detoxification by transmembrane export across the plasma membrane"/>
    <property type="evidence" value="ECO:0007669"/>
    <property type="project" value="InterPro"/>
</dbReference>
<dbReference type="Gene3D" id="6.10.250.2480">
    <property type="match status" value="1"/>
</dbReference>
<dbReference type="HAMAP" id="MF_01484">
    <property type="entry name" value="AcrZ"/>
    <property type="match status" value="1"/>
</dbReference>
<dbReference type="InterPro" id="IPR019702">
    <property type="entry name" value="AcrZ"/>
</dbReference>
<dbReference type="InterPro" id="IPR053730">
    <property type="entry name" value="MEP_Accessory_AcrZ"/>
</dbReference>
<dbReference type="Pfam" id="PF10766">
    <property type="entry name" value="AcrZ"/>
    <property type="match status" value="1"/>
</dbReference>
<keyword id="KW-0046">Antibiotic resistance</keyword>
<keyword id="KW-0997">Cell inner membrane</keyword>
<keyword id="KW-1003">Cell membrane</keyword>
<keyword id="KW-0472">Membrane</keyword>
<keyword id="KW-1185">Reference proteome</keyword>
<keyword id="KW-0812">Transmembrane</keyword>
<keyword id="KW-1133">Transmembrane helix</keyword>
<keyword id="KW-0813">Transport</keyword>
<organism>
    <name type="scientific">Escherichia coli O6:H1 (strain CFT073 / ATCC 700928 / UPEC)</name>
    <dbReference type="NCBI Taxonomy" id="199310"/>
    <lineage>
        <taxon>Bacteria</taxon>
        <taxon>Pseudomonadati</taxon>
        <taxon>Pseudomonadota</taxon>
        <taxon>Gammaproteobacteria</taxon>
        <taxon>Enterobacterales</taxon>
        <taxon>Enterobacteriaceae</taxon>
        <taxon>Escherichia</taxon>
    </lineage>
</organism>
<reference key="1">
    <citation type="journal article" date="2002" name="Proc. Natl. Acad. Sci. U.S.A.">
        <title>Extensive mosaic structure revealed by the complete genome sequence of uropathogenic Escherichia coli.</title>
        <authorList>
            <person name="Welch R.A."/>
            <person name="Burland V."/>
            <person name="Plunkett G. III"/>
            <person name="Redford P."/>
            <person name="Roesch P."/>
            <person name="Rasko D."/>
            <person name="Buckles E.L."/>
            <person name="Liou S.-R."/>
            <person name="Boutin A."/>
            <person name="Hackett J."/>
            <person name="Stroud D."/>
            <person name="Mayhew G.F."/>
            <person name="Rose D.J."/>
            <person name="Zhou S."/>
            <person name="Schwartz D.C."/>
            <person name="Perna N.T."/>
            <person name="Mobley H.L.T."/>
            <person name="Donnenberg M.S."/>
            <person name="Blattner F.R."/>
        </authorList>
    </citation>
    <scope>NUCLEOTIDE SEQUENCE [LARGE SCALE GENOMIC DNA]</scope>
    <source>
        <strain>CFT073 / ATCC 700928 / UPEC</strain>
    </source>
</reference>
<gene>
    <name evidence="2" type="primary">acrZ</name>
    <name type="synonym">ybhT</name>
    <name type="ordered locus">c0838</name>
</gene>
<evidence type="ECO:0000250" key="1"/>
<evidence type="ECO:0000255" key="2">
    <source>
        <dbReference type="HAMAP-Rule" id="MF_01484"/>
    </source>
</evidence>
<evidence type="ECO:0000305" key="3"/>
<comment type="function">
    <text evidence="2">AcrA-AcrB-AcrZ-TolC is a drug efflux protein complex with a broad substrate specificity. This protein binds to AcrB and is required for efflux of some but not all substrates, suggesting it may influence the specificity of drug export.</text>
</comment>
<comment type="subunit">
    <text evidence="2">Part of the AcrA-AcrB-AcrZ-TolC efflux pump, interacts directly with AcrB.</text>
</comment>
<comment type="subcellular location">
    <subcellularLocation>
        <location evidence="2">Cell inner membrane</location>
        <topology evidence="2">Single-pass membrane protein</topology>
    </subcellularLocation>
</comment>
<comment type="similarity">
    <text evidence="2">Belongs to the AcrZ family.</text>
</comment>
<comment type="sequence caution" evidence="3">
    <conflict type="erroneous initiation">
        <sequence resource="EMBL-CDS" id="AAN79311"/>
    </conflict>
    <text>Extended N-terminus.</text>
</comment>
<sequence length="49" mass="5300">MLELLKSLVFAVIMVPVVMAIILGLIYGLGEVFNIFSGVGKKDQPGQNH</sequence>
<protein>
    <recommendedName>
        <fullName evidence="2">Multidrug efflux pump accessory protein AcrZ</fullName>
    </recommendedName>
    <alternativeName>
        <fullName evidence="2">AcrAB-TolC multidrug efflux pump accessory protein AcrZ</fullName>
    </alternativeName>
    <alternativeName>
        <fullName evidence="2">Acridine resistance protein Z</fullName>
    </alternativeName>
</protein>
<proteinExistence type="inferred from homology"/>